<dbReference type="EC" id="1.8.-.-"/>
<dbReference type="EMBL" id="AC005698">
    <property type="protein sequence ID" value="AAD43619.1"/>
    <property type="status" value="ALT_SEQ"/>
    <property type="molecule type" value="Genomic_DNA"/>
</dbReference>
<dbReference type="EMBL" id="CP002684">
    <property type="protein sequence ID" value="AEE33987.1"/>
    <property type="molecule type" value="Genomic_DNA"/>
</dbReference>
<dbReference type="EMBL" id="BX815465">
    <property type="status" value="NOT_ANNOTATED_CDS"/>
    <property type="molecule type" value="mRNA"/>
</dbReference>
<dbReference type="RefSeq" id="NP_176450.2">
    <property type="nucleotide sequence ID" value="NM_104940.4"/>
</dbReference>
<dbReference type="SMR" id="Q9SXD5"/>
<dbReference type="FunCoup" id="Q9SXD5">
    <property type="interactions" value="471"/>
</dbReference>
<dbReference type="STRING" id="3702.Q9SXD5"/>
<dbReference type="PaxDb" id="3702-AT1G62620.1"/>
<dbReference type="ProteomicsDB" id="247226"/>
<dbReference type="EnsemblPlants" id="AT1G62620.1">
    <property type="protein sequence ID" value="AT1G62620.1"/>
    <property type="gene ID" value="AT1G62620"/>
</dbReference>
<dbReference type="GeneID" id="842559"/>
<dbReference type="Gramene" id="AT1G62620.1">
    <property type="protein sequence ID" value="AT1G62620.1"/>
    <property type="gene ID" value="AT1G62620"/>
</dbReference>
<dbReference type="KEGG" id="ath:AT1G62620"/>
<dbReference type="Araport" id="AT1G62620"/>
<dbReference type="TAIR" id="AT1G62620"/>
<dbReference type="eggNOG" id="KOG1399">
    <property type="taxonomic scope" value="Eukaryota"/>
</dbReference>
<dbReference type="HOGENOM" id="CLU_006909_3_0_1"/>
<dbReference type="InParanoid" id="Q9SXD5"/>
<dbReference type="PhylomeDB" id="Q9SXD5"/>
<dbReference type="BioCyc" id="ARA:AT1G62620-MONOMER"/>
<dbReference type="PRO" id="PR:Q9SXD5"/>
<dbReference type="Proteomes" id="UP000006548">
    <property type="component" value="Chromosome 1"/>
</dbReference>
<dbReference type="ExpressionAtlas" id="Q9SXD5">
    <property type="expression patterns" value="baseline and differential"/>
</dbReference>
<dbReference type="GO" id="GO:0050660">
    <property type="term" value="F:flavin adenine dinucleotide binding"/>
    <property type="evidence" value="ECO:0007669"/>
    <property type="project" value="InterPro"/>
</dbReference>
<dbReference type="GO" id="GO:0004499">
    <property type="term" value="F:N,N-dimethylaniline monooxygenase activity"/>
    <property type="evidence" value="ECO:0007669"/>
    <property type="project" value="InterPro"/>
</dbReference>
<dbReference type="GO" id="GO:0050661">
    <property type="term" value="F:NADP binding"/>
    <property type="evidence" value="ECO:0007669"/>
    <property type="project" value="InterPro"/>
</dbReference>
<dbReference type="FunFam" id="3.50.50.60:FF:000099">
    <property type="entry name" value="Flavin-containing monooxygenase"/>
    <property type="match status" value="1"/>
</dbReference>
<dbReference type="Gene3D" id="3.50.50.60">
    <property type="entry name" value="FAD/NAD(P)-binding domain"/>
    <property type="match status" value="2"/>
</dbReference>
<dbReference type="InterPro" id="IPR036188">
    <property type="entry name" value="FAD/NAD-bd_sf"/>
</dbReference>
<dbReference type="InterPro" id="IPR000960">
    <property type="entry name" value="Flavin_mOase"/>
</dbReference>
<dbReference type="InterPro" id="IPR020946">
    <property type="entry name" value="Flavin_mOase-like"/>
</dbReference>
<dbReference type="InterPro" id="IPR050346">
    <property type="entry name" value="FMO-like"/>
</dbReference>
<dbReference type="PANTHER" id="PTHR23023">
    <property type="entry name" value="DIMETHYLANILINE MONOOXYGENASE"/>
    <property type="match status" value="1"/>
</dbReference>
<dbReference type="Pfam" id="PF00743">
    <property type="entry name" value="FMO-like"/>
    <property type="match status" value="2"/>
</dbReference>
<dbReference type="PIRSF" id="PIRSF000332">
    <property type="entry name" value="FMO"/>
    <property type="match status" value="1"/>
</dbReference>
<dbReference type="PRINTS" id="PR00370">
    <property type="entry name" value="FMOXYGENASE"/>
</dbReference>
<dbReference type="SUPFAM" id="SSF51905">
    <property type="entry name" value="FAD/NAD(P)-binding domain"/>
    <property type="match status" value="2"/>
</dbReference>
<sequence>MAPALSPTRSHHVAVIGAGPAGLVAARELRREGHSVVVFEKQKQVGGTWIYTDEVESDPLSVDPTRSVVHSSVYRSLRINGTRECTGYRDFPFVVRSGVSRDPRRFPSHGEVLAYLKDFAKEFGIEEMVRFETEVVKVSPAAEEGIGKWRIESTEKEKKVRRDEIYDAVVVCNGHYVEPRLAQIPGISSWPGKEMHSHNYRIPEPFRDKVVVLIGNSSSAEDISRDIARVAKEVHVACRSNPADTFIKQTGYNNLWTHSMIESVHEDGSVVYQNGKTISVDIIMHCTGYKYHFPFLDTNGIVTVDDNRVGPLYKDVFPPAFAPWLSFIGIPWQVLPFPMFELQSKWIAGVLSGRIPLPSKEDMMIEIKTFYSTLEVQGIPKRYTHRMGNTQFEYYNWLASQCGCSETEEWRKEMCLANGVRKEAHPETYRDEWDDHHLVSEAYQDFSLYS</sequence>
<organism>
    <name type="scientific">Arabidopsis thaliana</name>
    <name type="common">Mouse-ear cress</name>
    <dbReference type="NCBI Taxonomy" id="3702"/>
    <lineage>
        <taxon>Eukaryota</taxon>
        <taxon>Viridiplantae</taxon>
        <taxon>Streptophyta</taxon>
        <taxon>Embryophyta</taxon>
        <taxon>Tracheophyta</taxon>
        <taxon>Spermatophyta</taxon>
        <taxon>Magnoliopsida</taxon>
        <taxon>eudicotyledons</taxon>
        <taxon>Gunneridae</taxon>
        <taxon>Pentapetalae</taxon>
        <taxon>rosids</taxon>
        <taxon>malvids</taxon>
        <taxon>Brassicales</taxon>
        <taxon>Brassicaceae</taxon>
        <taxon>Camelineae</taxon>
        <taxon>Arabidopsis</taxon>
    </lineage>
</organism>
<evidence type="ECO:0000250" key="1"/>
<evidence type="ECO:0000255" key="2"/>
<evidence type="ECO:0000305" key="3"/>
<keyword id="KW-0274">FAD</keyword>
<keyword id="KW-0285">Flavoprotein</keyword>
<keyword id="KW-0503">Monooxygenase</keyword>
<keyword id="KW-0521">NADP</keyword>
<keyword id="KW-0560">Oxidoreductase</keyword>
<keyword id="KW-1185">Reference proteome</keyword>
<reference key="1">
    <citation type="journal article" date="2000" name="Nature">
        <title>Sequence and analysis of chromosome 1 of the plant Arabidopsis thaliana.</title>
        <authorList>
            <person name="Theologis A."/>
            <person name="Ecker J.R."/>
            <person name="Palm C.J."/>
            <person name="Federspiel N.A."/>
            <person name="Kaul S."/>
            <person name="White O."/>
            <person name="Alonso J."/>
            <person name="Altafi H."/>
            <person name="Araujo R."/>
            <person name="Bowman C.L."/>
            <person name="Brooks S.Y."/>
            <person name="Buehler E."/>
            <person name="Chan A."/>
            <person name="Chao Q."/>
            <person name="Chen H."/>
            <person name="Cheuk R.F."/>
            <person name="Chin C.W."/>
            <person name="Chung M.K."/>
            <person name="Conn L."/>
            <person name="Conway A.B."/>
            <person name="Conway A.R."/>
            <person name="Creasy T.H."/>
            <person name="Dewar K."/>
            <person name="Dunn P."/>
            <person name="Etgu P."/>
            <person name="Feldblyum T.V."/>
            <person name="Feng J.-D."/>
            <person name="Fong B."/>
            <person name="Fujii C.Y."/>
            <person name="Gill J.E."/>
            <person name="Goldsmith A.D."/>
            <person name="Haas B."/>
            <person name="Hansen N.F."/>
            <person name="Hughes B."/>
            <person name="Huizar L."/>
            <person name="Hunter J.L."/>
            <person name="Jenkins J."/>
            <person name="Johnson-Hopson C."/>
            <person name="Khan S."/>
            <person name="Khaykin E."/>
            <person name="Kim C.J."/>
            <person name="Koo H.L."/>
            <person name="Kremenetskaia I."/>
            <person name="Kurtz D.B."/>
            <person name="Kwan A."/>
            <person name="Lam B."/>
            <person name="Langin-Hooper S."/>
            <person name="Lee A."/>
            <person name="Lee J.M."/>
            <person name="Lenz C.A."/>
            <person name="Li J.H."/>
            <person name="Li Y.-P."/>
            <person name="Lin X."/>
            <person name="Liu S.X."/>
            <person name="Liu Z.A."/>
            <person name="Luros J.S."/>
            <person name="Maiti R."/>
            <person name="Marziali A."/>
            <person name="Militscher J."/>
            <person name="Miranda M."/>
            <person name="Nguyen M."/>
            <person name="Nierman W.C."/>
            <person name="Osborne B.I."/>
            <person name="Pai G."/>
            <person name="Peterson J."/>
            <person name="Pham P.K."/>
            <person name="Rizzo M."/>
            <person name="Rooney T."/>
            <person name="Rowley D."/>
            <person name="Sakano H."/>
            <person name="Salzberg S.L."/>
            <person name="Schwartz J.R."/>
            <person name="Shinn P."/>
            <person name="Southwick A.M."/>
            <person name="Sun H."/>
            <person name="Tallon L.J."/>
            <person name="Tambunga G."/>
            <person name="Toriumi M.J."/>
            <person name="Town C.D."/>
            <person name="Utterback T."/>
            <person name="Van Aken S."/>
            <person name="Vaysberg M."/>
            <person name="Vysotskaia V.S."/>
            <person name="Walker M."/>
            <person name="Wu D."/>
            <person name="Yu G."/>
            <person name="Fraser C.M."/>
            <person name="Venter J.C."/>
            <person name="Davis R.W."/>
        </authorList>
    </citation>
    <scope>NUCLEOTIDE SEQUENCE [LARGE SCALE GENOMIC DNA]</scope>
    <source>
        <strain>cv. Columbia</strain>
    </source>
</reference>
<reference key="2">
    <citation type="journal article" date="2017" name="Plant J.">
        <title>Araport11: a complete reannotation of the Arabidopsis thaliana reference genome.</title>
        <authorList>
            <person name="Cheng C.Y."/>
            <person name="Krishnakumar V."/>
            <person name="Chan A.P."/>
            <person name="Thibaud-Nissen F."/>
            <person name="Schobel S."/>
            <person name="Town C.D."/>
        </authorList>
    </citation>
    <scope>GENOME REANNOTATION</scope>
    <source>
        <strain>cv. Columbia</strain>
    </source>
</reference>
<reference key="3">
    <citation type="journal article" date="2004" name="Genome Res.">
        <title>Whole genome sequence comparisons and 'full-length' cDNA sequences: a combined approach to evaluate and improve Arabidopsis genome annotation.</title>
        <authorList>
            <person name="Castelli V."/>
            <person name="Aury J.-M."/>
            <person name="Jaillon O."/>
            <person name="Wincker P."/>
            <person name="Clepet C."/>
            <person name="Menard M."/>
            <person name="Cruaud C."/>
            <person name="Quetier F."/>
            <person name="Scarpelli C."/>
            <person name="Schaechter V."/>
            <person name="Temple G."/>
            <person name="Caboche M."/>
            <person name="Weissenbach J."/>
            <person name="Salanoubat M."/>
        </authorList>
    </citation>
    <scope>NUCLEOTIDE SEQUENCE [LARGE SCALE MRNA]</scope>
    <source>
        <strain>cv. Columbia</strain>
    </source>
</reference>
<reference key="4">
    <citation type="journal article" date="2007" name="Plant J.">
        <title>Identification of a flavin-monooxygenase as the S-oxygenating enzyme in aliphatic glucosinolate biosynthesis in Arabidopsis.</title>
        <authorList>
            <person name="Hansen B.G."/>
            <person name="Kliebenstein D.J."/>
            <person name="Halkier B.A."/>
        </authorList>
    </citation>
    <scope>GENE FAMILY</scope>
    <source>
        <strain>cv. Columbia</strain>
    </source>
</reference>
<proteinExistence type="evidence at transcript level"/>
<name>GSXL3_ARATH</name>
<protein>
    <recommendedName>
        <fullName>Flavin-containing monooxygenase FMO GS-OX-like 3</fullName>
        <ecNumber>1.8.-.-</ecNumber>
    </recommendedName>
    <alternativeName>
        <fullName>Flavin-monooxygenase glucosinolate S-oxygenase-like 3</fullName>
    </alternativeName>
</protein>
<feature type="chain" id="PRO_0000401958" description="Flavin-containing monooxygenase FMO GS-OX-like 3">
    <location>
        <begin position="1"/>
        <end position="450"/>
    </location>
</feature>
<feature type="binding site" evidence="2">
    <location>
        <begin position="17"/>
        <end position="22"/>
    </location>
    <ligand>
        <name>FAD</name>
        <dbReference type="ChEBI" id="CHEBI:57692"/>
    </ligand>
</feature>
<feature type="binding site" evidence="2">
    <location>
        <begin position="215"/>
        <end position="220"/>
    </location>
    <ligand>
        <name>NADP(+)</name>
        <dbReference type="ChEBI" id="CHEBI:58349"/>
    </ligand>
</feature>
<gene>
    <name type="ordered locus">At1g62620</name>
    <name type="ORF">T3P18.18</name>
</gene>
<comment type="function">
    <text evidence="1">Catalyzes the conversion of methylthioalkyl glucosinolates of any chain length into methylsulfinylalkyl glucosinolates.</text>
</comment>
<comment type="cofactor">
    <cofactor evidence="1">
        <name>FAD</name>
        <dbReference type="ChEBI" id="CHEBI:57692"/>
    </cofactor>
</comment>
<comment type="similarity">
    <text evidence="3">Belongs to the FMO family.</text>
</comment>
<comment type="sequence caution" evidence="3">
    <conflict type="erroneous gene model prediction">
        <sequence resource="EMBL-CDS" id="AAD43619"/>
    </conflict>
</comment>
<comment type="sequence caution" evidence="3">
    <conflict type="miscellaneous discrepancy">
        <sequence resource="EMBL" id="BX815465"/>
    </conflict>
    <text>Sequencing errors.</text>
</comment>
<accession>Q9SXD5</accession>